<sequence length="599" mass="66647">MDRIAQSDLSLGFGSSHALPLPHPPRIPIADDSITLQIDSSFRPSSNPMPPVPLQLLEQRFDVTGSCSRVVEEDDEVVGDNDDDDQREEEQFILLGHPMKLKRGRGGNSYSLASSSPCKRFVVDSGIESRRAVVRAWGNQSIEEADPEIHEFMEKEKQRQFRGIELIASENFVCRAVMEALGSHLTNKYSEGMPGARYYTGNQYIDQIEILCQERALAAFGLNHEKWGVNVQPYSCTSANFAVFTGLLMPGERIMGLDSPSGGHMSHGYYTPGGKKVSGASIFFESFPYKVDPRTGYIDYDKLEEKALDYRPKILICGGSSYPRDWEFPRFRHIADKCGAVLMFDMAQISGLVAAKESPNPFDYCDIVTSTTHKSLRGPRGGIIFYKRGLKPKKQSINLNHCESNIQYDFEEKINFSVFPSLQGGPHNNHIAALAIALKQAASPEYKLYMRQVKKNAKALASALISRKCKLITGGTDNHLLLWDLTPLGLTGKVYEKVCEMCHITVNKVAIFSENGVISPGGVRIGSPAMTSRGCLEPEFETMADFLYRAAQIASAAQREHGKLQKEPLKSIYHCKEIADLRNQVEAFATQFAMPAFDM</sequence>
<name>GLYC6_ARATH</name>
<comment type="function">
    <text evidence="1">Catalyzes the interconversion of serine and glycine.</text>
</comment>
<comment type="catalytic activity">
    <reaction>
        <text>(6R)-5,10-methylene-5,6,7,8-tetrahydrofolate + glycine + H2O = (6S)-5,6,7,8-tetrahydrofolate + L-serine</text>
        <dbReference type="Rhea" id="RHEA:15481"/>
        <dbReference type="ChEBI" id="CHEBI:15377"/>
        <dbReference type="ChEBI" id="CHEBI:15636"/>
        <dbReference type="ChEBI" id="CHEBI:33384"/>
        <dbReference type="ChEBI" id="CHEBI:57305"/>
        <dbReference type="ChEBI" id="CHEBI:57453"/>
        <dbReference type="EC" id="2.1.2.1"/>
    </reaction>
</comment>
<comment type="cofactor">
    <cofactor evidence="1">
        <name>pyridoxal 5'-phosphate</name>
        <dbReference type="ChEBI" id="CHEBI:597326"/>
    </cofactor>
</comment>
<comment type="pathway">
    <text>One-carbon metabolism; tetrahydrofolate interconversion.</text>
</comment>
<comment type="subunit">
    <text evidence="1">Homotetramer.</text>
</comment>
<comment type="subcellular location">
    <subcellularLocation>
        <location evidence="3">Cytoplasm</location>
    </subcellularLocation>
</comment>
<comment type="similarity">
    <text evidence="3">Belongs to the SHMT family.</text>
</comment>
<gene>
    <name type="primary">SHM6</name>
    <name type="synonym">SHMT6</name>
    <name type="ordered locus">At1g22020</name>
    <name type="ORF">F2E2.7</name>
</gene>
<proteinExistence type="evidence at protein level"/>
<keyword id="KW-0002">3D-structure</keyword>
<keyword id="KW-0963">Cytoplasm</keyword>
<keyword id="KW-0554">One-carbon metabolism</keyword>
<keyword id="KW-0663">Pyridoxal phosphate</keyword>
<keyword id="KW-1185">Reference proteome</keyword>
<keyword id="KW-0808">Transferase</keyword>
<evidence type="ECO:0000250" key="1"/>
<evidence type="ECO:0000256" key="2">
    <source>
        <dbReference type="SAM" id="MobiDB-lite"/>
    </source>
</evidence>
<evidence type="ECO:0000305" key="3"/>
<evidence type="ECO:0007829" key="4">
    <source>
        <dbReference type="PDB" id="7QPE"/>
    </source>
</evidence>
<feature type="chain" id="PRO_0000422351" description="Serine hydroxymethyltransferase 6">
    <location>
        <begin position="1"/>
        <end position="599"/>
    </location>
</feature>
<feature type="region of interest" description="Disordered" evidence="2">
    <location>
        <begin position="1"/>
        <end position="25"/>
    </location>
</feature>
<feature type="modified residue" description="N6-(pyridoxal phosphate)lysine" evidence="1">
    <location>
        <position position="374"/>
    </location>
</feature>
<feature type="helix" evidence="4">
    <location>
        <begin position="127"/>
        <end position="138"/>
    </location>
</feature>
<feature type="helix" evidence="4">
    <location>
        <begin position="142"/>
        <end position="145"/>
    </location>
</feature>
<feature type="helix" evidence="4">
    <location>
        <begin position="147"/>
        <end position="161"/>
    </location>
</feature>
<feature type="strand" evidence="4">
    <location>
        <begin position="162"/>
        <end position="165"/>
    </location>
</feature>
<feature type="helix" evidence="4">
    <location>
        <begin position="175"/>
        <end position="181"/>
    </location>
</feature>
<feature type="helix" evidence="4">
    <location>
        <begin position="184"/>
        <end position="187"/>
    </location>
</feature>
<feature type="strand" evidence="4">
    <location>
        <begin position="196"/>
        <end position="200"/>
    </location>
</feature>
<feature type="helix" evidence="4">
    <location>
        <begin position="203"/>
        <end position="219"/>
    </location>
</feature>
<feature type="turn" evidence="4">
    <location>
        <begin position="224"/>
        <end position="226"/>
    </location>
</feature>
<feature type="strand" evidence="4">
    <location>
        <begin position="227"/>
        <end position="230"/>
    </location>
</feature>
<feature type="helix" evidence="4">
    <location>
        <begin position="236"/>
        <end position="247"/>
    </location>
</feature>
<feature type="strand" evidence="4">
    <location>
        <begin position="253"/>
        <end position="255"/>
    </location>
</feature>
<feature type="helix" evidence="4">
    <location>
        <begin position="279"/>
        <end position="283"/>
    </location>
</feature>
<feature type="strand" evidence="4">
    <location>
        <begin position="284"/>
        <end position="286"/>
    </location>
</feature>
<feature type="turn" evidence="4">
    <location>
        <begin position="293"/>
        <end position="295"/>
    </location>
</feature>
<feature type="strand" evidence="4">
    <location>
        <begin position="296"/>
        <end position="298"/>
    </location>
</feature>
<feature type="helix" evidence="4">
    <location>
        <begin position="300"/>
        <end position="310"/>
    </location>
</feature>
<feature type="strand" evidence="4">
    <location>
        <begin position="313"/>
        <end position="318"/>
    </location>
</feature>
<feature type="helix" evidence="4">
    <location>
        <begin position="328"/>
        <end position="338"/>
    </location>
</feature>
<feature type="strand" evidence="4">
    <location>
        <begin position="341"/>
        <end position="346"/>
    </location>
</feature>
<feature type="turn" evidence="4">
    <location>
        <begin position="347"/>
        <end position="349"/>
    </location>
</feature>
<feature type="helix" evidence="4">
    <location>
        <begin position="350"/>
        <end position="354"/>
    </location>
</feature>
<feature type="helix" evidence="4">
    <location>
        <begin position="361"/>
        <end position="363"/>
    </location>
</feature>
<feature type="strand" evidence="4">
    <location>
        <begin position="366"/>
        <end position="376"/>
    </location>
</feature>
<feature type="strand" evidence="4">
    <location>
        <begin position="382"/>
        <end position="387"/>
    </location>
</feature>
<feature type="helix" evidence="4">
    <location>
        <begin position="410"/>
        <end position="418"/>
    </location>
</feature>
<feature type="turn" evidence="4">
    <location>
        <begin position="419"/>
        <end position="422"/>
    </location>
</feature>
<feature type="helix" evidence="4">
    <location>
        <begin position="428"/>
        <end position="441"/>
    </location>
</feature>
<feature type="helix" evidence="4">
    <location>
        <begin position="444"/>
        <end position="465"/>
    </location>
</feature>
<feature type="turn" evidence="4">
    <location>
        <begin position="466"/>
        <end position="468"/>
    </location>
</feature>
<feature type="helix" evidence="4">
    <location>
        <begin position="472"/>
        <end position="474"/>
    </location>
</feature>
<feature type="strand" evidence="4">
    <location>
        <begin position="477"/>
        <end position="484"/>
    </location>
</feature>
<feature type="helix" evidence="4">
    <location>
        <begin position="486"/>
        <end position="488"/>
    </location>
</feature>
<feature type="helix" evidence="4">
    <location>
        <begin position="492"/>
        <end position="500"/>
    </location>
</feature>
<feature type="turn" evidence="4">
    <location>
        <begin position="501"/>
        <end position="503"/>
    </location>
</feature>
<feature type="strand" evidence="4">
    <location>
        <begin position="518"/>
        <end position="520"/>
    </location>
</feature>
<feature type="strand" evidence="4">
    <location>
        <begin position="522"/>
        <end position="527"/>
    </location>
</feature>
<feature type="helix" evidence="4">
    <location>
        <begin position="528"/>
        <end position="532"/>
    </location>
</feature>
<feature type="helix" evidence="4">
    <location>
        <begin position="537"/>
        <end position="554"/>
    </location>
</feature>
<feature type="helix" evidence="4">
    <location>
        <begin position="578"/>
        <end position="589"/>
    </location>
</feature>
<accession>Q9LM59</accession>
<organism>
    <name type="scientific">Arabidopsis thaliana</name>
    <name type="common">Mouse-ear cress</name>
    <dbReference type="NCBI Taxonomy" id="3702"/>
    <lineage>
        <taxon>Eukaryota</taxon>
        <taxon>Viridiplantae</taxon>
        <taxon>Streptophyta</taxon>
        <taxon>Embryophyta</taxon>
        <taxon>Tracheophyta</taxon>
        <taxon>Spermatophyta</taxon>
        <taxon>Magnoliopsida</taxon>
        <taxon>eudicotyledons</taxon>
        <taxon>Gunneridae</taxon>
        <taxon>Pentapetalae</taxon>
        <taxon>rosids</taxon>
        <taxon>malvids</taxon>
        <taxon>Brassicales</taxon>
        <taxon>Brassicaceae</taxon>
        <taxon>Camelineae</taxon>
        <taxon>Arabidopsis</taxon>
    </lineage>
</organism>
<reference key="1">
    <citation type="journal article" date="2000" name="Nature">
        <title>Sequence and analysis of chromosome 1 of the plant Arabidopsis thaliana.</title>
        <authorList>
            <person name="Theologis A."/>
            <person name="Ecker J.R."/>
            <person name="Palm C.J."/>
            <person name="Federspiel N.A."/>
            <person name="Kaul S."/>
            <person name="White O."/>
            <person name="Alonso J."/>
            <person name="Altafi H."/>
            <person name="Araujo R."/>
            <person name="Bowman C.L."/>
            <person name="Brooks S.Y."/>
            <person name="Buehler E."/>
            <person name="Chan A."/>
            <person name="Chao Q."/>
            <person name="Chen H."/>
            <person name="Cheuk R.F."/>
            <person name="Chin C.W."/>
            <person name="Chung M.K."/>
            <person name="Conn L."/>
            <person name="Conway A.B."/>
            <person name="Conway A.R."/>
            <person name="Creasy T.H."/>
            <person name="Dewar K."/>
            <person name="Dunn P."/>
            <person name="Etgu P."/>
            <person name="Feldblyum T.V."/>
            <person name="Feng J.-D."/>
            <person name="Fong B."/>
            <person name="Fujii C.Y."/>
            <person name="Gill J.E."/>
            <person name="Goldsmith A.D."/>
            <person name="Haas B."/>
            <person name="Hansen N.F."/>
            <person name="Hughes B."/>
            <person name="Huizar L."/>
            <person name="Hunter J.L."/>
            <person name="Jenkins J."/>
            <person name="Johnson-Hopson C."/>
            <person name="Khan S."/>
            <person name="Khaykin E."/>
            <person name="Kim C.J."/>
            <person name="Koo H.L."/>
            <person name="Kremenetskaia I."/>
            <person name="Kurtz D.B."/>
            <person name="Kwan A."/>
            <person name="Lam B."/>
            <person name="Langin-Hooper S."/>
            <person name="Lee A."/>
            <person name="Lee J.M."/>
            <person name="Lenz C.A."/>
            <person name="Li J.H."/>
            <person name="Li Y.-P."/>
            <person name="Lin X."/>
            <person name="Liu S.X."/>
            <person name="Liu Z.A."/>
            <person name="Luros J.S."/>
            <person name="Maiti R."/>
            <person name="Marziali A."/>
            <person name="Militscher J."/>
            <person name="Miranda M."/>
            <person name="Nguyen M."/>
            <person name="Nierman W.C."/>
            <person name="Osborne B.I."/>
            <person name="Pai G."/>
            <person name="Peterson J."/>
            <person name="Pham P.K."/>
            <person name="Rizzo M."/>
            <person name="Rooney T."/>
            <person name="Rowley D."/>
            <person name="Sakano H."/>
            <person name="Salzberg S.L."/>
            <person name="Schwartz J.R."/>
            <person name="Shinn P."/>
            <person name="Southwick A.M."/>
            <person name="Sun H."/>
            <person name="Tallon L.J."/>
            <person name="Tambunga G."/>
            <person name="Toriumi M.J."/>
            <person name="Town C.D."/>
            <person name="Utterback T."/>
            <person name="Van Aken S."/>
            <person name="Vaysberg M."/>
            <person name="Vysotskaia V.S."/>
            <person name="Walker M."/>
            <person name="Wu D."/>
            <person name="Yu G."/>
            <person name="Fraser C.M."/>
            <person name="Venter J.C."/>
            <person name="Davis R.W."/>
        </authorList>
    </citation>
    <scope>NUCLEOTIDE SEQUENCE [LARGE SCALE GENOMIC DNA]</scope>
    <source>
        <strain>cv. Columbia</strain>
    </source>
</reference>
<reference key="2">
    <citation type="journal article" date="2017" name="Plant J.">
        <title>Araport11: a complete reannotation of the Arabidopsis thaliana reference genome.</title>
        <authorList>
            <person name="Cheng C.Y."/>
            <person name="Krishnakumar V."/>
            <person name="Chan A.P."/>
            <person name="Thibaud-Nissen F."/>
            <person name="Schobel S."/>
            <person name="Town C.D."/>
        </authorList>
    </citation>
    <scope>GENOME REANNOTATION</scope>
    <source>
        <strain>cv. Columbia</strain>
    </source>
</reference>
<reference key="3">
    <citation type="journal article" date="2003" name="Science">
        <title>Empirical analysis of transcriptional activity in the Arabidopsis genome.</title>
        <authorList>
            <person name="Yamada K."/>
            <person name="Lim J."/>
            <person name="Dale J.M."/>
            <person name="Chen H."/>
            <person name="Shinn P."/>
            <person name="Palm C.J."/>
            <person name="Southwick A.M."/>
            <person name="Wu H.C."/>
            <person name="Kim C.J."/>
            <person name="Nguyen M."/>
            <person name="Pham P.K."/>
            <person name="Cheuk R.F."/>
            <person name="Karlin-Newmann G."/>
            <person name="Liu S.X."/>
            <person name="Lam B."/>
            <person name="Sakano H."/>
            <person name="Wu T."/>
            <person name="Yu G."/>
            <person name="Miranda M."/>
            <person name="Quach H.L."/>
            <person name="Tripp M."/>
            <person name="Chang C.H."/>
            <person name="Lee J.M."/>
            <person name="Toriumi M.J."/>
            <person name="Chan M.M."/>
            <person name="Tang C.C."/>
            <person name="Onodera C.S."/>
            <person name="Deng J.M."/>
            <person name="Akiyama K."/>
            <person name="Ansari Y."/>
            <person name="Arakawa T."/>
            <person name="Banh J."/>
            <person name="Banno F."/>
            <person name="Bowser L."/>
            <person name="Brooks S.Y."/>
            <person name="Carninci P."/>
            <person name="Chao Q."/>
            <person name="Choy N."/>
            <person name="Enju A."/>
            <person name="Goldsmith A.D."/>
            <person name="Gurjal M."/>
            <person name="Hansen N.F."/>
            <person name="Hayashizaki Y."/>
            <person name="Johnson-Hopson C."/>
            <person name="Hsuan V.W."/>
            <person name="Iida K."/>
            <person name="Karnes M."/>
            <person name="Khan S."/>
            <person name="Koesema E."/>
            <person name="Ishida J."/>
            <person name="Jiang P.X."/>
            <person name="Jones T."/>
            <person name="Kawai J."/>
            <person name="Kamiya A."/>
            <person name="Meyers C."/>
            <person name="Nakajima M."/>
            <person name="Narusaka M."/>
            <person name="Seki M."/>
            <person name="Sakurai T."/>
            <person name="Satou M."/>
            <person name="Tamse R."/>
            <person name="Vaysberg M."/>
            <person name="Wallender E.K."/>
            <person name="Wong C."/>
            <person name="Yamamura Y."/>
            <person name="Yuan S."/>
            <person name="Shinozaki K."/>
            <person name="Davis R.W."/>
            <person name="Theologis A."/>
            <person name="Ecker J.R."/>
        </authorList>
    </citation>
    <scope>NUCLEOTIDE SEQUENCE [LARGE SCALE MRNA]</scope>
    <source>
        <strain>cv. Columbia</strain>
    </source>
</reference>
<reference key="4">
    <citation type="journal article" date="2003" name="J. Exp. Bot.">
        <title>Genetic manipulation of glycine decarboxylation.</title>
        <authorList>
            <person name="Bauwe H."/>
            <person name="Kolukisaoglu U."/>
        </authorList>
    </citation>
    <scope>REVIEW</scope>
</reference>
<reference key="5">
    <citation type="journal article" date="2010" name="Biochem. J.">
        <title>One-carbon metabolism in plants: characterization of a plastid serine hydroxymethyltransferase.</title>
        <authorList>
            <person name="Zhang Y."/>
            <person name="Sun K."/>
            <person name="Sandoval F.J."/>
            <person name="Santiago K."/>
            <person name="Roje S."/>
        </authorList>
    </citation>
    <scope>GENE FAMILY</scope>
</reference>
<dbReference type="EC" id="2.1.2.1"/>
<dbReference type="EMBL" id="AC069252">
    <property type="protein sequence ID" value="AAF86546.1"/>
    <property type="molecule type" value="Genomic_DNA"/>
</dbReference>
<dbReference type="EMBL" id="CP002684">
    <property type="protein sequence ID" value="AEE30186.1"/>
    <property type="molecule type" value="Genomic_DNA"/>
</dbReference>
<dbReference type="EMBL" id="CP002684">
    <property type="protein sequence ID" value="ANM60843.1"/>
    <property type="molecule type" value="Genomic_DNA"/>
</dbReference>
<dbReference type="EMBL" id="AY125514">
    <property type="protein sequence ID" value="AAM78106.1"/>
    <property type="molecule type" value="mRNA"/>
</dbReference>
<dbReference type="EMBL" id="BT004532">
    <property type="protein sequence ID" value="AAO42778.1"/>
    <property type="molecule type" value="mRNA"/>
</dbReference>
<dbReference type="RefSeq" id="NP_001323098.1">
    <property type="nucleotide sequence ID" value="NM_001332533.1"/>
</dbReference>
<dbReference type="RefSeq" id="NP_173621.1">
    <property type="nucleotide sequence ID" value="NM_102052.3"/>
</dbReference>
<dbReference type="PDB" id="7QPE">
    <property type="method" value="X-ray"/>
    <property type="resolution" value="2.18 A"/>
    <property type="chains" value="A/B=127-599"/>
</dbReference>
<dbReference type="PDBsum" id="7QPE"/>
<dbReference type="SMR" id="Q9LM59"/>
<dbReference type="FunCoup" id="Q9LM59">
    <property type="interactions" value="1043"/>
</dbReference>
<dbReference type="STRING" id="3702.Q9LM59"/>
<dbReference type="iPTMnet" id="Q9LM59"/>
<dbReference type="PaxDb" id="3702-AT1G22020.1"/>
<dbReference type="ProteomicsDB" id="248528"/>
<dbReference type="EnsemblPlants" id="AT1G22020.1">
    <property type="protein sequence ID" value="AT1G22020.1"/>
    <property type="gene ID" value="AT1G22020"/>
</dbReference>
<dbReference type="EnsemblPlants" id="AT1G22020.2">
    <property type="protein sequence ID" value="AT1G22020.2"/>
    <property type="gene ID" value="AT1G22020"/>
</dbReference>
<dbReference type="GeneID" id="838807"/>
<dbReference type="Gramene" id="AT1G22020.1">
    <property type="protein sequence ID" value="AT1G22020.1"/>
    <property type="gene ID" value="AT1G22020"/>
</dbReference>
<dbReference type="Gramene" id="AT1G22020.2">
    <property type="protein sequence ID" value="AT1G22020.2"/>
    <property type="gene ID" value="AT1G22020"/>
</dbReference>
<dbReference type="KEGG" id="ath:AT1G22020"/>
<dbReference type="Araport" id="AT1G22020"/>
<dbReference type="TAIR" id="AT1G22020">
    <property type="gene designation" value="SHM6"/>
</dbReference>
<dbReference type="eggNOG" id="KOG2467">
    <property type="taxonomic scope" value="Eukaryota"/>
</dbReference>
<dbReference type="HOGENOM" id="CLU_022477_0_1_1"/>
<dbReference type="InParanoid" id="Q9LM59"/>
<dbReference type="OMA" id="SHGHPAT"/>
<dbReference type="PhylomeDB" id="Q9LM59"/>
<dbReference type="BioCyc" id="ARA:AT1G22020-MONOMER"/>
<dbReference type="UniPathway" id="UPA00193"/>
<dbReference type="PRO" id="PR:Q9LM59"/>
<dbReference type="Proteomes" id="UP000006548">
    <property type="component" value="Chromosome 1"/>
</dbReference>
<dbReference type="ExpressionAtlas" id="Q9LM59">
    <property type="expression patterns" value="baseline and differential"/>
</dbReference>
<dbReference type="GO" id="GO:0005737">
    <property type="term" value="C:cytoplasm"/>
    <property type="evidence" value="ECO:0007669"/>
    <property type="project" value="UniProtKB-SubCell"/>
</dbReference>
<dbReference type="GO" id="GO:0004372">
    <property type="term" value="F:glycine hydroxymethyltransferase activity"/>
    <property type="evidence" value="ECO:0007669"/>
    <property type="project" value="UniProtKB-EC"/>
</dbReference>
<dbReference type="GO" id="GO:0030170">
    <property type="term" value="F:pyridoxal phosphate binding"/>
    <property type="evidence" value="ECO:0007669"/>
    <property type="project" value="InterPro"/>
</dbReference>
<dbReference type="GO" id="GO:0019264">
    <property type="term" value="P:glycine biosynthetic process from serine"/>
    <property type="evidence" value="ECO:0007669"/>
    <property type="project" value="InterPro"/>
</dbReference>
<dbReference type="GO" id="GO:0035999">
    <property type="term" value="P:tetrahydrofolate interconversion"/>
    <property type="evidence" value="ECO:0007669"/>
    <property type="project" value="UniProtKB-UniPathway"/>
</dbReference>
<dbReference type="CDD" id="cd00378">
    <property type="entry name" value="SHMT"/>
    <property type="match status" value="1"/>
</dbReference>
<dbReference type="FunFam" id="3.40.640.10:FF:000097">
    <property type="entry name" value="Serine hydroxymethyltransferase"/>
    <property type="match status" value="1"/>
</dbReference>
<dbReference type="Gene3D" id="3.90.1150.10">
    <property type="entry name" value="Aspartate Aminotransferase, domain 1"/>
    <property type="match status" value="1"/>
</dbReference>
<dbReference type="Gene3D" id="3.40.640.10">
    <property type="entry name" value="Type I PLP-dependent aspartate aminotransferase-like (Major domain)"/>
    <property type="match status" value="1"/>
</dbReference>
<dbReference type="HAMAP" id="MF_00051">
    <property type="entry name" value="SHMT"/>
    <property type="match status" value="1"/>
</dbReference>
<dbReference type="InterPro" id="IPR015424">
    <property type="entry name" value="PyrdxlP-dep_Trfase"/>
</dbReference>
<dbReference type="InterPro" id="IPR015421">
    <property type="entry name" value="PyrdxlP-dep_Trfase_major"/>
</dbReference>
<dbReference type="InterPro" id="IPR015422">
    <property type="entry name" value="PyrdxlP-dep_Trfase_small"/>
</dbReference>
<dbReference type="InterPro" id="IPR001085">
    <property type="entry name" value="Ser_HO-MeTrfase"/>
</dbReference>
<dbReference type="InterPro" id="IPR049943">
    <property type="entry name" value="Ser_HO-MeTrfase-like"/>
</dbReference>
<dbReference type="InterPro" id="IPR019798">
    <property type="entry name" value="Ser_HO-MeTrfase_PLP_BS"/>
</dbReference>
<dbReference type="InterPro" id="IPR039429">
    <property type="entry name" value="SHMT-like_dom"/>
</dbReference>
<dbReference type="NCBIfam" id="NF000586">
    <property type="entry name" value="PRK00011.1"/>
    <property type="match status" value="1"/>
</dbReference>
<dbReference type="PANTHER" id="PTHR11680">
    <property type="entry name" value="SERINE HYDROXYMETHYLTRANSFERASE"/>
    <property type="match status" value="1"/>
</dbReference>
<dbReference type="PANTHER" id="PTHR11680:SF36">
    <property type="entry name" value="SERINE HYDROXYMETHYLTRANSFERASE 6"/>
    <property type="match status" value="1"/>
</dbReference>
<dbReference type="Pfam" id="PF00464">
    <property type="entry name" value="SHMT"/>
    <property type="match status" value="1"/>
</dbReference>
<dbReference type="SUPFAM" id="SSF53383">
    <property type="entry name" value="PLP-dependent transferases"/>
    <property type="match status" value="1"/>
</dbReference>
<dbReference type="PROSITE" id="PS00096">
    <property type="entry name" value="SHMT"/>
    <property type="match status" value="1"/>
</dbReference>
<protein>
    <recommendedName>
        <fullName>Serine hydroxymethyltransferase 6</fullName>
        <shortName>AtSHMT6</shortName>
        <ecNumber>2.1.2.1</ecNumber>
    </recommendedName>
    <alternativeName>
        <fullName>Glycine hydroxymethyltransferase 6</fullName>
    </alternativeName>
    <alternativeName>
        <fullName>Serine methylase 6</fullName>
    </alternativeName>
</protein>